<proteinExistence type="inferred from homology"/>
<accession>P67354</accession>
<accession>Q48Y06</accession>
<accession>Q99Z40</accession>
<feature type="chain" id="PRO_0000161394" description="UPF0213 protein SPy_1412/M5005_Spy1151">
    <location>
        <begin position="1"/>
        <end position="92"/>
    </location>
</feature>
<feature type="domain" description="GIY-YIG" evidence="1">
    <location>
        <begin position="4"/>
        <end position="80"/>
    </location>
</feature>
<evidence type="ECO:0000255" key="1">
    <source>
        <dbReference type="PROSITE-ProRule" id="PRU00977"/>
    </source>
</evidence>
<evidence type="ECO:0000305" key="2"/>
<sequence length="92" mass="10735">MTTKKAYMYVLECVDKTLYTGYTTDLKKRLATHNAGKGAKYTRYRLPVSLLYYEVFDSKEAAMSAEALFKKRKTRSQKLAYIATHQKEKKNH</sequence>
<comment type="similarity">
    <text evidence="2">Belongs to the UPF0213 family.</text>
</comment>
<keyword id="KW-1185">Reference proteome</keyword>
<organism>
    <name type="scientific">Streptococcus pyogenes serotype M1</name>
    <dbReference type="NCBI Taxonomy" id="301447"/>
    <lineage>
        <taxon>Bacteria</taxon>
        <taxon>Bacillati</taxon>
        <taxon>Bacillota</taxon>
        <taxon>Bacilli</taxon>
        <taxon>Lactobacillales</taxon>
        <taxon>Streptococcaceae</taxon>
        <taxon>Streptococcus</taxon>
    </lineage>
</organism>
<gene>
    <name type="ordered locus">SPy_1412</name>
    <name type="ordered locus">M5005_Spy1151</name>
</gene>
<dbReference type="EMBL" id="AE004092">
    <property type="protein sequence ID" value="AAK34227.1"/>
    <property type="molecule type" value="Genomic_DNA"/>
</dbReference>
<dbReference type="EMBL" id="CP000017">
    <property type="protein sequence ID" value="AAZ51769.1"/>
    <property type="molecule type" value="Genomic_DNA"/>
</dbReference>
<dbReference type="RefSeq" id="NP_269506.1">
    <property type="nucleotide sequence ID" value="NC_002737.2"/>
</dbReference>
<dbReference type="SMR" id="P67354"/>
<dbReference type="PaxDb" id="1314-HKU360_01187"/>
<dbReference type="KEGG" id="spy:SPy_1412"/>
<dbReference type="KEGG" id="spz:M5005_Spy1151"/>
<dbReference type="PATRIC" id="fig|160490.10.peg.1231"/>
<dbReference type="HOGENOM" id="CLU_135650_0_3_9"/>
<dbReference type="OMA" id="VYVEQWP"/>
<dbReference type="Proteomes" id="UP000000750">
    <property type="component" value="Chromosome"/>
</dbReference>
<dbReference type="CDD" id="cd10456">
    <property type="entry name" value="GIY-YIG_UPF0213"/>
    <property type="match status" value="1"/>
</dbReference>
<dbReference type="Gene3D" id="3.40.1440.10">
    <property type="entry name" value="GIY-YIG endonuclease"/>
    <property type="match status" value="1"/>
</dbReference>
<dbReference type="InterPro" id="IPR000305">
    <property type="entry name" value="GIY-YIG_endonuc"/>
</dbReference>
<dbReference type="InterPro" id="IPR035901">
    <property type="entry name" value="GIY-YIG_endonuc_sf"/>
</dbReference>
<dbReference type="InterPro" id="IPR050190">
    <property type="entry name" value="UPF0213_domain"/>
</dbReference>
<dbReference type="PANTHER" id="PTHR34477">
    <property type="entry name" value="UPF0213 PROTEIN YHBQ"/>
    <property type="match status" value="1"/>
</dbReference>
<dbReference type="PANTHER" id="PTHR34477:SF1">
    <property type="entry name" value="UPF0213 PROTEIN YHBQ"/>
    <property type="match status" value="1"/>
</dbReference>
<dbReference type="Pfam" id="PF01541">
    <property type="entry name" value="GIY-YIG"/>
    <property type="match status" value="1"/>
</dbReference>
<dbReference type="SUPFAM" id="SSF82771">
    <property type="entry name" value="GIY-YIG endonuclease"/>
    <property type="match status" value="1"/>
</dbReference>
<dbReference type="PROSITE" id="PS50164">
    <property type="entry name" value="GIY_YIG"/>
    <property type="match status" value="1"/>
</dbReference>
<reference key="1">
    <citation type="journal article" date="2001" name="Proc. Natl. Acad. Sci. U.S.A.">
        <title>Complete genome sequence of an M1 strain of Streptococcus pyogenes.</title>
        <authorList>
            <person name="Ferretti J.J."/>
            <person name="McShan W.M."/>
            <person name="Ajdic D.J."/>
            <person name="Savic D.J."/>
            <person name="Savic G."/>
            <person name="Lyon K."/>
            <person name="Primeaux C."/>
            <person name="Sezate S."/>
            <person name="Suvorov A.N."/>
            <person name="Kenton S."/>
            <person name="Lai H.S."/>
            <person name="Lin S.P."/>
            <person name="Qian Y."/>
            <person name="Jia H.G."/>
            <person name="Najar F.Z."/>
            <person name="Ren Q."/>
            <person name="Zhu H."/>
            <person name="Song L."/>
            <person name="White J."/>
            <person name="Yuan X."/>
            <person name="Clifton S.W."/>
            <person name="Roe B.A."/>
            <person name="McLaughlin R.E."/>
        </authorList>
    </citation>
    <scope>NUCLEOTIDE SEQUENCE [LARGE SCALE GENOMIC DNA]</scope>
    <source>
        <strain>ATCC 700294 / SF370 / Serotype M1</strain>
    </source>
</reference>
<reference key="2">
    <citation type="journal article" date="2005" name="J. Infect. Dis.">
        <title>Evolutionary origin and emergence of a highly successful clone of serotype M1 group A Streptococcus involved multiple horizontal gene transfer events.</title>
        <authorList>
            <person name="Sumby P."/>
            <person name="Porcella S.F."/>
            <person name="Madrigal A.G."/>
            <person name="Barbian K.D."/>
            <person name="Virtaneva K."/>
            <person name="Ricklefs S.M."/>
            <person name="Sturdevant D.E."/>
            <person name="Graham M.R."/>
            <person name="Vuopio-Varkila J."/>
            <person name="Hoe N.P."/>
            <person name="Musser J.M."/>
        </authorList>
    </citation>
    <scope>NUCLEOTIDE SEQUENCE [LARGE SCALE GENOMIC DNA]</scope>
    <source>
        <strain>ATCC BAA-947 / MGAS5005 / Serotype M1</strain>
    </source>
</reference>
<name>Y1412_STRP1</name>
<protein>
    <recommendedName>
        <fullName>UPF0213 protein SPy_1412/M5005_Spy1151</fullName>
    </recommendedName>
</protein>